<accession>A3MQI7</accession>
<keyword id="KW-0963">Cytoplasm</keyword>
<keyword id="KW-0274">FAD</keyword>
<keyword id="KW-0285">Flavoprotein</keyword>
<keyword id="KW-0520">NAD</keyword>
<keyword id="KW-0819">tRNA processing</keyword>
<dbReference type="EMBL" id="CP000548">
    <property type="protein sequence ID" value="ABO05443.1"/>
    <property type="molecule type" value="Genomic_DNA"/>
</dbReference>
<dbReference type="RefSeq" id="WP_004195816.1">
    <property type="nucleotide sequence ID" value="NZ_CP007802.1"/>
</dbReference>
<dbReference type="SMR" id="A3MQI7"/>
<dbReference type="GeneID" id="93062036"/>
<dbReference type="KEGG" id="bmaz:BM44_347"/>
<dbReference type="KEGG" id="bmn:BMA10247_3003"/>
<dbReference type="PATRIC" id="fig|320389.8.peg.383"/>
<dbReference type="GO" id="GO:0005829">
    <property type="term" value="C:cytosol"/>
    <property type="evidence" value="ECO:0007669"/>
    <property type="project" value="TreeGrafter"/>
</dbReference>
<dbReference type="GO" id="GO:0050660">
    <property type="term" value="F:flavin adenine dinucleotide binding"/>
    <property type="evidence" value="ECO:0007669"/>
    <property type="project" value="UniProtKB-UniRule"/>
</dbReference>
<dbReference type="GO" id="GO:0030488">
    <property type="term" value="P:tRNA methylation"/>
    <property type="evidence" value="ECO:0007669"/>
    <property type="project" value="TreeGrafter"/>
</dbReference>
<dbReference type="GO" id="GO:0002098">
    <property type="term" value="P:tRNA wobble uridine modification"/>
    <property type="evidence" value="ECO:0007669"/>
    <property type="project" value="InterPro"/>
</dbReference>
<dbReference type="FunFam" id="1.10.10.1800:FF:000001">
    <property type="entry name" value="tRNA uridine 5-carboxymethylaminomethyl modification enzyme MnmG"/>
    <property type="match status" value="1"/>
</dbReference>
<dbReference type="FunFam" id="1.10.150.570:FF:000001">
    <property type="entry name" value="tRNA uridine 5-carboxymethylaminomethyl modification enzyme MnmG"/>
    <property type="match status" value="1"/>
</dbReference>
<dbReference type="FunFam" id="3.50.50.60:FF:000002">
    <property type="entry name" value="tRNA uridine 5-carboxymethylaminomethyl modification enzyme MnmG"/>
    <property type="match status" value="1"/>
</dbReference>
<dbReference type="FunFam" id="3.50.50.60:FF:000010">
    <property type="entry name" value="tRNA uridine 5-carboxymethylaminomethyl modification enzyme MnmG"/>
    <property type="match status" value="1"/>
</dbReference>
<dbReference type="Gene3D" id="3.50.50.60">
    <property type="entry name" value="FAD/NAD(P)-binding domain"/>
    <property type="match status" value="2"/>
</dbReference>
<dbReference type="Gene3D" id="1.10.150.570">
    <property type="entry name" value="GidA associated domain, C-terminal subdomain"/>
    <property type="match status" value="1"/>
</dbReference>
<dbReference type="Gene3D" id="1.10.10.1800">
    <property type="entry name" value="tRNA uridine 5-carboxymethylaminomethyl modification enzyme MnmG/GidA"/>
    <property type="match status" value="1"/>
</dbReference>
<dbReference type="HAMAP" id="MF_00129">
    <property type="entry name" value="MnmG_GidA"/>
    <property type="match status" value="1"/>
</dbReference>
<dbReference type="InterPro" id="IPR036188">
    <property type="entry name" value="FAD/NAD-bd_sf"/>
</dbReference>
<dbReference type="InterPro" id="IPR049312">
    <property type="entry name" value="GIDA_C_N"/>
</dbReference>
<dbReference type="InterPro" id="IPR004416">
    <property type="entry name" value="MnmG"/>
</dbReference>
<dbReference type="InterPro" id="IPR002218">
    <property type="entry name" value="MnmG-rel"/>
</dbReference>
<dbReference type="InterPro" id="IPR020595">
    <property type="entry name" value="MnmG-rel_CS"/>
</dbReference>
<dbReference type="InterPro" id="IPR026904">
    <property type="entry name" value="MnmG_C"/>
</dbReference>
<dbReference type="InterPro" id="IPR047001">
    <property type="entry name" value="MnmG_C_subdom"/>
</dbReference>
<dbReference type="InterPro" id="IPR044920">
    <property type="entry name" value="MnmG_C_subdom_sf"/>
</dbReference>
<dbReference type="InterPro" id="IPR040131">
    <property type="entry name" value="MnmG_N"/>
</dbReference>
<dbReference type="NCBIfam" id="TIGR00136">
    <property type="entry name" value="mnmG_gidA"/>
    <property type="match status" value="1"/>
</dbReference>
<dbReference type="PANTHER" id="PTHR11806">
    <property type="entry name" value="GLUCOSE INHIBITED DIVISION PROTEIN A"/>
    <property type="match status" value="1"/>
</dbReference>
<dbReference type="PANTHER" id="PTHR11806:SF0">
    <property type="entry name" value="PROTEIN MTO1 HOMOLOG, MITOCHONDRIAL"/>
    <property type="match status" value="1"/>
</dbReference>
<dbReference type="Pfam" id="PF01134">
    <property type="entry name" value="GIDA"/>
    <property type="match status" value="1"/>
</dbReference>
<dbReference type="Pfam" id="PF21680">
    <property type="entry name" value="GIDA_C_1st"/>
    <property type="match status" value="1"/>
</dbReference>
<dbReference type="Pfam" id="PF13932">
    <property type="entry name" value="SAM_GIDA_C"/>
    <property type="match status" value="1"/>
</dbReference>
<dbReference type="SMART" id="SM01228">
    <property type="entry name" value="GIDA_assoc_3"/>
    <property type="match status" value="1"/>
</dbReference>
<dbReference type="SUPFAM" id="SSF51905">
    <property type="entry name" value="FAD/NAD(P)-binding domain"/>
    <property type="match status" value="1"/>
</dbReference>
<dbReference type="PROSITE" id="PS01280">
    <property type="entry name" value="GIDA_1"/>
    <property type="match status" value="1"/>
</dbReference>
<dbReference type="PROSITE" id="PS01281">
    <property type="entry name" value="GIDA_2"/>
    <property type="match status" value="1"/>
</dbReference>
<evidence type="ECO:0000255" key="1">
    <source>
        <dbReference type="HAMAP-Rule" id="MF_00129"/>
    </source>
</evidence>
<evidence type="ECO:0000256" key="2">
    <source>
        <dbReference type="SAM" id="MobiDB-lite"/>
    </source>
</evidence>
<comment type="function">
    <text evidence="1">NAD-binding protein involved in the addition of a carboxymethylaminomethyl (cmnm) group at the wobble position (U34) of certain tRNAs, forming tRNA-cmnm(5)s(2)U34.</text>
</comment>
<comment type="cofactor">
    <cofactor evidence="1">
        <name>FAD</name>
        <dbReference type="ChEBI" id="CHEBI:57692"/>
    </cofactor>
</comment>
<comment type="subunit">
    <text evidence="1">Homodimer. Heterotetramer of two MnmE and two MnmG subunits.</text>
</comment>
<comment type="subcellular location">
    <subcellularLocation>
        <location evidence="1">Cytoplasm</location>
    </subcellularLocation>
</comment>
<comment type="similarity">
    <text evidence="1">Belongs to the MnmG family.</text>
</comment>
<proteinExistence type="inferred from homology"/>
<reference key="1">
    <citation type="journal article" date="2010" name="Genome Biol. Evol.">
        <title>Continuing evolution of Burkholderia mallei through genome reduction and large-scale rearrangements.</title>
        <authorList>
            <person name="Losada L."/>
            <person name="Ronning C.M."/>
            <person name="DeShazer D."/>
            <person name="Woods D."/>
            <person name="Fedorova N."/>
            <person name="Kim H.S."/>
            <person name="Shabalina S.A."/>
            <person name="Pearson T.R."/>
            <person name="Brinkac L."/>
            <person name="Tan P."/>
            <person name="Nandi T."/>
            <person name="Crabtree J."/>
            <person name="Badger J."/>
            <person name="Beckstrom-Sternberg S."/>
            <person name="Saqib M."/>
            <person name="Schutzer S.E."/>
            <person name="Keim P."/>
            <person name="Nierman W.C."/>
        </authorList>
    </citation>
    <scope>NUCLEOTIDE SEQUENCE [LARGE SCALE GENOMIC DNA]</scope>
    <source>
        <strain>NCTC 10247</strain>
    </source>
</reference>
<sequence length="657" mass="71981">MLYPTEFDVIVVGGGHAGTEAALASARMGAKTLLLTHNIETLGQMSCNPSIGGIGKGHLVKEVDALGGAMAAATDEGGIQFRILNSSKGPAVRATRAQADRVLYKQAIRRRLENQPNLWLFQQAVDDLMVEGDRVVGAVTQVGVRFRARAVVLTAGTFLDGKIHVGLNHYTGGRAGDPAAVSLSSRLKELNLPQGRLKTGTPPRIDGRTIDFSKLDEQPGDLDPIPVFSFLGRAEQHPQQLPCWVTHTNERTHDIIRSGLDRSPMYTGVIEGVGPRYCPSIEDKIHRFASKDSHQIFLEPEGLTTNEFYPNGISTSLPFDVQLALVHSMRGLEQAHILRPGYAIEYDYFDPRALKSSLETKAIGGLFFAGQINGTTGYEEAAAQGLLAGINAGRYAQEKDAWCPRRDQAYLGVLVDDLVTRGVSEPYRMFTSRAEYRLSLREDNADMRLTEIGRELGVVDDVRWDAFNRKRDAVSRETERLRTTWVTPKTLPADEATALLGKPIDHEYSLAELLRRPGVSYDGVCGLRGGECGPSEPLAEDELLLAQIKEQIEIGIKYQGYIERQAGEIERNGANENTRLPDGIDYTEVRGLSFEVSQKLNQFRPETIGQASRISGMTPAAISLLMVHLKKRGLGRRKGADSVPGADVQADNTAAQQ</sequence>
<name>MNMG_BURM7</name>
<gene>
    <name evidence="1" type="primary">mnmG</name>
    <name evidence="1" type="synonym">gidA</name>
    <name type="ordered locus">BMA10247_3003</name>
</gene>
<organism>
    <name type="scientific">Burkholderia mallei (strain NCTC 10247)</name>
    <dbReference type="NCBI Taxonomy" id="320389"/>
    <lineage>
        <taxon>Bacteria</taxon>
        <taxon>Pseudomonadati</taxon>
        <taxon>Pseudomonadota</taxon>
        <taxon>Betaproteobacteria</taxon>
        <taxon>Burkholderiales</taxon>
        <taxon>Burkholderiaceae</taxon>
        <taxon>Burkholderia</taxon>
        <taxon>pseudomallei group</taxon>
    </lineage>
</organism>
<protein>
    <recommendedName>
        <fullName evidence="1">tRNA uridine 5-carboxymethylaminomethyl modification enzyme MnmG</fullName>
    </recommendedName>
    <alternativeName>
        <fullName evidence="1">Glucose-inhibited division protein A</fullName>
    </alternativeName>
</protein>
<feature type="chain" id="PRO_1000016563" description="tRNA uridine 5-carboxymethylaminomethyl modification enzyme MnmG">
    <location>
        <begin position="1"/>
        <end position="657"/>
    </location>
</feature>
<feature type="region of interest" description="Disordered" evidence="2">
    <location>
        <begin position="636"/>
        <end position="657"/>
    </location>
</feature>
<feature type="binding site" evidence="1">
    <location>
        <begin position="13"/>
        <end position="18"/>
    </location>
    <ligand>
        <name>FAD</name>
        <dbReference type="ChEBI" id="CHEBI:57692"/>
    </ligand>
</feature>
<feature type="binding site" evidence="1">
    <location>
        <begin position="274"/>
        <end position="288"/>
    </location>
    <ligand>
        <name>NAD(+)</name>
        <dbReference type="ChEBI" id="CHEBI:57540"/>
    </ligand>
</feature>